<organism>
    <name type="scientific">Cryptococcus neoformans var. neoformans serotype D (strain JEC21 / ATCC MYA-565)</name>
    <name type="common">Filobasidiella neoformans</name>
    <dbReference type="NCBI Taxonomy" id="214684"/>
    <lineage>
        <taxon>Eukaryota</taxon>
        <taxon>Fungi</taxon>
        <taxon>Dikarya</taxon>
        <taxon>Basidiomycota</taxon>
        <taxon>Agaricomycotina</taxon>
        <taxon>Tremellomycetes</taxon>
        <taxon>Tremellales</taxon>
        <taxon>Cryptococcaceae</taxon>
        <taxon>Cryptococcus</taxon>
        <taxon>Cryptococcus neoformans species complex</taxon>
    </lineage>
</organism>
<dbReference type="EC" id="2.1.1.220"/>
<dbReference type="EMBL" id="AE017348">
    <property type="protein sequence ID" value="AAW45025.1"/>
    <property type="molecule type" value="Genomic_DNA"/>
</dbReference>
<dbReference type="RefSeq" id="XP_572332.1">
    <property type="nucleotide sequence ID" value="XM_572332.1"/>
</dbReference>
<dbReference type="SMR" id="P0CS08"/>
<dbReference type="FunCoup" id="P0CS08">
    <property type="interactions" value="225"/>
</dbReference>
<dbReference type="STRING" id="214684.P0CS08"/>
<dbReference type="PaxDb" id="214684-P0CS08"/>
<dbReference type="EnsemblFungi" id="AAW45025">
    <property type="protein sequence ID" value="AAW45025"/>
    <property type="gene ID" value="CNH01430"/>
</dbReference>
<dbReference type="GeneID" id="3259165"/>
<dbReference type="KEGG" id="cne:CNH01430"/>
<dbReference type="VEuPathDB" id="FungiDB:CNH01430"/>
<dbReference type="eggNOG" id="KOG2915">
    <property type="taxonomic scope" value="Eukaryota"/>
</dbReference>
<dbReference type="HOGENOM" id="CLU_025402_4_0_1"/>
<dbReference type="InParanoid" id="P0CS08"/>
<dbReference type="OMA" id="RITRICC"/>
<dbReference type="OrthoDB" id="1925287at2759"/>
<dbReference type="Proteomes" id="UP000002149">
    <property type="component" value="Chromosome 8"/>
</dbReference>
<dbReference type="GO" id="GO:0005634">
    <property type="term" value="C:nucleus"/>
    <property type="evidence" value="ECO:0000318"/>
    <property type="project" value="GO_Central"/>
</dbReference>
<dbReference type="GO" id="GO:0031515">
    <property type="term" value="C:tRNA (m1A) methyltransferase complex"/>
    <property type="evidence" value="ECO:0000318"/>
    <property type="project" value="GO_Central"/>
</dbReference>
<dbReference type="GO" id="GO:0160107">
    <property type="term" value="F:tRNA (adenine(58)-N1)-methyltransferase activity"/>
    <property type="evidence" value="ECO:0007669"/>
    <property type="project" value="UniProtKB-EC"/>
</dbReference>
<dbReference type="GO" id="GO:0030488">
    <property type="term" value="P:tRNA methylation"/>
    <property type="evidence" value="ECO:0000318"/>
    <property type="project" value="GO_Central"/>
</dbReference>
<dbReference type="FunFam" id="3.10.330.20:FF:000007">
    <property type="entry name" value="tRNA (adenine(58)-N(1))-methyltransferase catalytic subunit TRM61"/>
    <property type="match status" value="1"/>
</dbReference>
<dbReference type="FunFam" id="3.40.50.150:FF:000247">
    <property type="entry name" value="tRNA (adenine(58)-N(1))-methyltransferase catalytic subunit TRM61"/>
    <property type="match status" value="1"/>
</dbReference>
<dbReference type="Gene3D" id="3.10.330.20">
    <property type="match status" value="1"/>
</dbReference>
<dbReference type="Gene3D" id="3.40.50.150">
    <property type="entry name" value="Vaccinia Virus protein VP39"/>
    <property type="match status" value="1"/>
</dbReference>
<dbReference type="InterPro" id="IPR029063">
    <property type="entry name" value="SAM-dependent_MTases_sf"/>
</dbReference>
<dbReference type="InterPro" id="IPR049470">
    <property type="entry name" value="TRM61_C"/>
</dbReference>
<dbReference type="InterPro" id="IPR014816">
    <property type="entry name" value="tRNA_MeTrfase_Gcd14"/>
</dbReference>
<dbReference type="PANTHER" id="PTHR12133">
    <property type="entry name" value="TRNA (ADENINE(58)-N(1))-METHYLTRANSFERASE"/>
    <property type="match status" value="1"/>
</dbReference>
<dbReference type="PANTHER" id="PTHR12133:SF2">
    <property type="entry name" value="TRNA (ADENINE(58)-N(1))-METHYLTRANSFERASE CATALYTIC SUBUNIT TRMT61A"/>
    <property type="match status" value="1"/>
</dbReference>
<dbReference type="Pfam" id="PF08704">
    <property type="entry name" value="GCD14"/>
    <property type="match status" value="1"/>
</dbReference>
<dbReference type="Pfam" id="PF14801">
    <property type="entry name" value="TrmI-like_N"/>
    <property type="match status" value="1"/>
</dbReference>
<dbReference type="SUPFAM" id="SSF53335">
    <property type="entry name" value="S-adenosyl-L-methionine-dependent methyltransferases"/>
    <property type="match status" value="1"/>
</dbReference>
<dbReference type="PROSITE" id="PS51620">
    <property type="entry name" value="SAM_TRM61"/>
    <property type="match status" value="1"/>
</dbReference>
<reference key="1">
    <citation type="journal article" date="2005" name="Science">
        <title>The genome of the basidiomycetous yeast and human pathogen Cryptococcus neoformans.</title>
        <authorList>
            <person name="Loftus B.J."/>
            <person name="Fung E."/>
            <person name="Roncaglia P."/>
            <person name="Rowley D."/>
            <person name="Amedeo P."/>
            <person name="Bruno D."/>
            <person name="Vamathevan J."/>
            <person name="Miranda M."/>
            <person name="Anderson I.J."/>
            <person name="Fraser J.A."/>
            <person name="Allen J.E."/>
            <person name="Bosdet I.E."/>
            <person name="Brent M.R."/>
            <person name="Chiu R."/>
            <person name="Doering T.L."/>
            <person name="Donlin M.J."/>
            <person name="D'Souza C.A."/>
            <person name="Fox D.S."/>
            <person name="Grinberg V."/>
            <person name="Fu J."/>
            <person name="Fukushima M."/>
            <person name="Haas B.J."/>
            <person name="Huang J.C."/>
            <person name="Janbon G."/>
            <person name="Jones S.J.M."/>
            <person name="Koo H.L."/>
            <person name="Krzywinski M.I."/>
            <person name="Kwon-Chung K.J."/>
            <person name="Lengeler K.B."/>
            <person name="Maiti R."/>
            <person name="Marra M.A."/>
            <person name="Marra R.E."/>
            <person name="Mathewson C.A."/>
            <person name="Mitchell T.G."/>
            <person name="Pertea M."/>
            <person name="Riggs F.R."/>
            <person name="Salzberg S.L."/>
            <person name="Schein J.E."/>
            <person name="Shvartsbeyn A."/>
            <person name="Shin H."/>
            <person name="Shumway M."/>
            <person name="Specht C.A."/>
            <person name="Suh B.B."/>
            <person name="Tenney A."/>
            <person name="Utterback T.R."/>
            <person name="Wickes B.L."/>
            <person name="Wortman J.R."/>
            <person name="Wye N.H."/>
            <person name="Kronstad J.W."/>
            <person name="Lodge J.K."/>
            <person name="Heitman J."/>
            <person name="Davis R.W."/>
            <person name="Fraser C.M."/>
            <person name="Hyman R.W."/>
        </authorList>
    </citation>
    <scope>NUCLEOTIDE SEQUENCE [LARGE SCALE GENOMIC DNA]</scope>
    <source>
        <strain>JEC21 / ATCC MYA-565</strain>
    </source>
</reference>
<evidence type="ECO:0000250" key="1">
    <source>
        <dbReference type="UniProtKB" id="P46959"/>
    </source>
</evidence>
<evidence type="ECO:0000250" key="2">
    <source>
        <dbReference type="UniProtKB" id="Q96FX7"/>
    </source>
</evidence>
<evidence type="ECO:0000255" key="3">
    <source>
        <dbReference type="PROSITE-ProRule" id="PRU00952"/>
    </source>
</evidence>
<evidence type="ECO:0000256" key="4">
    <source>
        <dbReference type="SAM" id="MobiDB-lite"/>
    </source>
</evidence>
<accession>P0CS08</accession>
<accession>Q55J46</accession>
<accession>Q5KCL4</accession>
<protein>
    <recommendedName>
        <fullName>tRNA (adenine(58)-N(1))-methyltransferase catalytic subunit TRM61</fullName>
        <ecNumber>2.1.1.220</ecNumber>
    </recommendedName>
    <alternativeName>
        <fullName>tRNA(m1A58)-methyltransferase subunit TRM61</fullName>
        <shortName>tRNA(m1A58)MTase subunit TRM61</shortName>
    </alternativeName>
</protein>
<comment type="function">
    <text evidence="1">Catalytic subunit of tRNA (adenine-N(1)-)-methyltransferase, which catalyzes the formation of N(1)-methyladenine at position 58 (m1A58) in initiator methionyl-tRNA.</text>
</comment>
<comment type="catalytic activity">
    <reaction evidence="3">
        <text>adenosine(58) in tRNA + S-adenosyl-L-methionine = N(1)-methyladenosine(58) in tRNA + S-adenosyl-L-homocysteine + H(+)</text>
        <dbReference type="Rhea" id="RHEA:43152"/>
        <dbReference type="Rhea" id="RHEA-COMP:10365"/>
        <dbReference type="Rhea" id="RHEA-COMP:10366"/>
        <dbReference type="ChEBI" id="CHEBI:15378"/>
        <dbReference type="ChEBI" id="CHEBI:57856"/>
        <dbReference type="ChEBI" id="CHEBI:59789"/>
        <dbReference type="ChEBI" id="CHEBI:74411"/>
        <dbReference type="ChEBI" id="CHEBI:74491"/>
        <dbReference type="EC" id="2.1.1.220"/>
    </reaction>
</comment>
<comment type="subunit">
    <text evidence="1">Heterotetramer; composed of two copies of TRM6 and two copies of TRM61.</text>
</comment>
<comment type="subcellular location">
    <subcellularLocation>
        <location evidence="1">Nucleus</location>
    </subcellularLocation>
</comment>
<comment type="similarity">
    <text evidence="3">Belongs to the class I-like SAM-binding methyltransferase superfamily. TRM61 family.</text>
</comment>
<name>TRM61_CRYNJ</name>
<gene>
    <name type="primary">TRM61</name>
    <name type="ordered locus">CNH01430</name>
</gene>
<feature type="chain" id="PRO_0000256172" description="tRNA (adenine(58)-N(1))-methyltransferase catalytic subunit TRM61">
    <location>
        <begin position="1"/>
        <end position="433"/>
    </location>
</feature>
<feature type="region of interest" description="Disordered" evidence="4">
    <location>
        <begin position="295"/>
        <end position="353"/>
    </location>
</feature>
<feature type="region of interest" description="Disordered" evidence="4">
    <location>
        <begin position="380"/>
        <end position="409"/>
    </location>
</feature>
<feature type="compositionally biased region" description="Polar residues" evidence="4">
    <location>
        <begin position="328"/>
        <end position="348"/>
    </location>
</feature>
<feature type="compositionally biased region" description="Polar residues" evidence="4">
    <location>
        <begin position="380"/>
        <end position="391"/>
    </location>
</feature>
<feature type="compositionally biased region" description="Basic and acidic residues" evidence="4">
    <location>
        <begin position="394"/>
        <end position="409"/>
    </location>
</feature>
<feature type="binding site" evidence="2">
    <location>
        <position position="92"/>
    </location>
    <ligand>
        <name>S-adenosyl-L-methionine</name>
        <dbReference type="ChEBI" id="CHEBI:59789"/>
    </ligand>
</feature>
<feature type="binding site" evidence="2">
    <location>
        <begin position="119"/>
        <end position="121"/>
    </location>
    <ligand>
        <name>S-adenosyl-L-methionine</name>
        <dbReference type="ChEBI" id="CHEBI:59789"/>
    </ligand>
</feature>
<feature type="binding site" evidence="2 3">
    <location>
        <position position="140"/>
    </location>
    <ligand>
        <name>S-adenosyl-L-methionine</name>
        <dbReference type="ChEBI" id="CHEBI:59789"/>
    </ligand>
</feature>
<feature type="binding site" evidence="2">
    <location>
        <position position="145"/>
    </location>
    <ligand>
        <name>S-adenosyl-L-methionine</name>
        <dbReference type="ChEBI" id="CHEBI:59789"/>
    </ligand>
</feature>
<feature type="binding site" evidence="2">
    <location>
        <begin position="167"/>
        <end position="168"/>
    </location>
    <ligand>
        <name>S-adenosyl-L-methionine</name>
        <dbReference type="ChEBI" id="CHEBI:59789"/>
    </ligand>
</feature>
<feature type="binding site" evidence="2 3">
    <location>
        <position position="185"/>
    </location>
    <ligand>
        <name>S-adenosyl-L-methionine</name>
        <dbReference type="ChEBI" id="CHEBI:59789"/>
    </ligand>
</feature>
<keyword id="KW-0489">Methyltransferase</keyword>
<keyword id="KW-0539">Nucleus</keyword>
<keyword id="KW-1185">Reference proteome</keyword>
<keyword id="KW-0949">S-adenosyl-L-methionine</keyword>
<keyword id="KW-0808">Transferase</keyword>
<keyword id="KW-0819">tRNA processing</keyword>
<sequence>MDIRKPMFHSRVHIEAGDIVILYMARDNMTAITITPGETFHNKYGRYPHDMLIGQKYGSKIHSPPPHPGYVHVLRPTPELWTLSLPHRTQILYLPDISYITMRLGVRVGGKVIEAGTGSGSMTHSLSRSVGPSGQVMSFEYHRQRFETALKEFESHGLTNVRLQHRNVCKEGFGDAQGVEGVFLDLPAPWEAIPHAVKALRRDIITRICCFSPCLEQVLKTVTCLRSEGFSDISTQEVLIRTHELVTPPPNTTYLSSISSVVSYLREHEQRKEERRLLQIKTAKENNRKVKGIEADDAIPVEGETGSKRKLEQPSVTGSDNAAPANSRPKTNLLWTEPPNTLPSTVLTKPSPEMKGHTSYLTFAILYPESVRLSMVAQETSSRVETPTNITKAPETHSQETHYSEGSEIEKIGAMTSKEMDDWMKSGSTSLSI</sequence>
<proteinExistence type="inferred from homology"/>